<feature type="chain" id="PRO_0000185392" description="Glucose-insensitive transcription protein 7">
    <location>
        <begin position="1"/>
        <end position="379"/>
    </location>
</feature>
<feature type="domain" description="CS" evidence="2">
    <location>
        <begin position="181"/>
        <end position="272"/>
    </location>
</feature>
<feature type="domain" description="SGS" evidence="1">
    <location>
        <begin position="292"/>
        <end position="379"/>
    </location>
</feature>
<feature type="region of interest" description="Disordered" evidence="3">
    <location>
        <begin position="345"/>
        <end position="379"/>
    </location>
</feature>
<feature type="compositionally biased region" description="Polar residues" evidence="3">
    <location>
        <begin position="346"/>
        <end position="358"/>
    </location>
</feature>
<sequence>MGVDLSDINDSLFKLSDKLSNDLAKQRNLCIVKEPSFSIEEHIKCFTTCINTYKPFSCLKHANWALLLAKKKSDTGLIGYCQSLRGLAYYLLEQYQSSAICFGFALKHLKKEDLTKWQVQLDSMLTIVHEQQNQDTSSLIPDECPNIPELEAAKIEGDEEFLNMSLKAPEGQIEKNEEKLSNRIRYDWSQTSFSLNIDIYAKKVKDEDVSLLMEKNTLKIEIKLEDGSIFSLVLDPLYEEIVPEKSSFKLFSSKVEITLIKKVSEIKWEALVKSPANNSVNVYAKDSNHSSASGNTKNKAKDWDSLAKLADLEEDEPTGEAALANLFQNLYKNADDDTRRAMMKSYTESNGTALSTNWKDVKSKTFETKPPQGMEPKKF</sequence>
<protein>
    <recommendedName>
        <fullName>Glucose-insensitive transcription protein 7</fullName>
    </recommendedName>
</protein>
<comment type="function">
    <text evidence="4">Involved in cyclic AMP (cAMP) pathway, possibly by participating in the assembly or the conformational activation of specific multiprotein complexes.</text>
</comment>
<dbReference type="EMBL" id="CU329671">
    <property type="protein sequence ID" value="CAA19060.2"/>
    <property type="molecule type" value="Genomic_DNA"/>
</dbReference>
<dbReference type="PIR" id="T40307">
    <property type="entry name" value="T40307"/>
</dbReference>
<dbReference type="RefSeq" id="NP_595340.1">
    <property type="nucleotide sequence ID" value="NM_001021248.2"/>
</dbReference>
<dbReference type="SMR" id="O59709"/>
<dbReference type="BioGRID" id="277478">
    <property type="interactions" value="4"/>
</dbReference>
<dbReference type="FunCoup" id="O59709">
    <property type="interactions" value="585"/>
</dbReference>
<dbReference type="STRING" id="284812.O59709"/>
<dbReference type="PaxDb" id="4896-SPBC36.12c.1"/>
<dbReference type="EnsemblFungi" id="SPBC36.12c.1">
    <property type="protein sequence ID" value="SPBC36.12c.1:pep"/>
    <property type="gene ID" value="SPBC36.12c"/>
</dbReference>
<dbReference type="GeneID" id="2540962"/>
<dbReference type="KEGG" id="spo:2540962"/>
<dbReference type="PomBase" id="SPBC36.12c">
    <property type="gene designation" value="git7"/>
</dbReference>
<dbReference type="VEuPathDB" id="FungiDB:SPBC36.12c"/>
<dbReference type="eggNOG" id="KOG1309">
    <property type="taxonomic scope" value="Eukaryota"/>
</dbReference>
<dbReference type="HOGENOM" id="CLU_039532_3_1_1"/>
<dbReference type="InParanoid" id="O59709"/>
<dbReference type="OMA" id="WRTWINE"/>
<dbReference type="PhylomeDB" id="O59709"/>
<dbReference type="Reactome" id="R-SPO-844456">
    <property type="pathway name" value="The NLRP3 inflammasome"/>
</dbReference>
<dbReference type="PRO" id="PR:O59709"/>
<dbReference type="Proteomes" id="UP000002485">
    <property type="component" value="Chromosome II"/>
</dbReference>
<dbReference type="GO" id="GO:0005737">
    <property type="term" value="C:cytoplasm"/>
    <property type="evidence" value="ECO:0000314"/>
    <property type="project" value="PomBase"/>
</dbReference>
<dbReference type="GO" id="GO:0005829">
    <property type="term" value="C:cytosol"/>
    <property type="evidence" value="ECO:0007005"/>
    <property type="project" value="PomBase"/>
</dbReference>
<dbReference type="GO" id="GO:0005634">
    <property type="term" value="C:nucleus"/>
    <property type="evidence" value="ECO:0000314"/>
    <property type="project" value="PomBase"/>
</dbReference>
<dbReference type="GO" id="GO:0051087">
    <property type="term" value="F:protein-folding chaperone binding"/>
    <property type="evidence" value="ECO:0000266"/>
    <property type="project" value="PomBase"/>
</dbReference>
<dbReference type="GO" id="GO:0010619">
    <property type="term" value="P:adenylate cyclase-activating glucose-activated G protein-coupled receptor signaling pathway"/>
    <property type="evidence" value="ECO:0000315"/>
    <property type="project" value="PomBase"/>
</dbReference>
<dbReference type="GO" id="GO:0006457">
    <property type="term" value="P:protein folding"/>
    <property type="evidence" value="ECO:0000305"/>
    <property type="project" value="PomBase"/>
</dbReference>
<dbReference type="CDD" id="cd06466">
    <property type="entry name" value="p23_CS_SGT1_like"/>
    <property type="match status" value="1"/>
</dbReference>
<dbReference type="FunFam" id="2.60.40.790:FF:000012">
    <property type="entry name" value="SGT1 homolog, MIS12 kinetochore complex assembly cochaperone"/>
    <property type="match status" value="1"/>
</dbReference>
<dbReference type="Gene3D" id="2.60.40.790">
    <property type="match status" value="1"/>
</dbReference>
<dbReference type="InterPro" id="IPR007052">
    <property type="entry name" value="CS_dom"/>
</dbReference>
<dbReference type="InterPro" id="IPR008978">
    <property type="entry name" value="HSP20-like_chaperone"/>
</dbReference>
<dbReference type="InterPro" id="IPR007699">
    <property type="entry name" value="SGS_dom"/>
</dbReference>
<dbReference type="InterPro" id="IPR044563">
    <property type="entry name" value="Sgt1-like"/>
</dbReference>
<dbReference type="PANTHER" id="PTHR45862">
    <property type="entry name" value="PROTEIN SGT1 HOMOLOG"/>
    <property type="match status" value="1"/>
</dbReference>
<dbReference type="Pfam" id="PF04969">
    <property type="entry name" value="CS"/>
    <property type="match status" value="1"/>
</dbReference>
<dbReference type="Pfam" id="PF05002">
    <property type="entry name" value="SGS"/>
    <property type="match status" value="1"/>
</dbReference>
<dbReference type="SUPFAM" id="SSF49764">
    <property type="entry name" value="HSP20-like chaperones"/>
    <property type="match status" value="1"/>
</dbReference>
<dbReference type="PROSITE" id="PS51203">
    <property type="entry name" value="CS"/>
    <property type="match status" value="1"/>
</dbReference>
<dbReference type="PROSITE" id="PS51048">
    <property type="entry name" value="SGS"/>
    <property type="match status" value="1"/>
</dbReference>
<proteinExistence type="predicted"/>
<organism>
    <name type="scientific">Schizosaccharomyces pombe (strain 972 / ATCC 24843)</name>
    <name type="common">Fission yeast</name>
    <dbReference type="NCBI Taxonomy" id="284812"/>
    <lineage>
        <taxon>Eukaryota</taxon>
        <taxon>Fungi</taxon>
        <taxon>Dikarya</taxon>
        <taxon>Ascomycota</taxon>
        <taxon>Taphrinomycotina</taxon>
        <taxon>Schizosaccharomycetes</taxon>
        <taxon>Schizosaccharomycetales</taxon>
        <taxon>Schizosaccharomycetaceae</taxon>
        <taxon>Schizosaccharomyces</taxon>
    </lineage>
</organism>
<name>GIT7_SCHPO</name>
<gene>
    <name type="primary">git7</name>
    <name type="ORF">SPBC36.12c</name>
    <name type="ORF">SPBC713.01c</name>
</gene>
<accession>O59709</accession>
<accession>Q9C1X3</accession>
<evidence type="ECO:0000255" key="1">
    <source>
        <dbReference type="PROSITE-ProRule" id="PRU00386"/>
    </source>
</evidence>
<evidence type="ECO:0000255" key="2">
    <source>
        <dbReference type="PROSITE-ProRule" id="PRU00547"/>
    </source>
</evidence>
<evidence type="ECO:0000256" key="3">
    <source>
        <dbReference type="SAM" id="MobiDB-lite"/>
    </source>
</evidence>
<evidence type="ECO:0000269" key="4">
    <source>
    </source>
</evidence>
<reference key="1">
    <citation type="journal article" date="2002" name="Nature">
        <title>The genome sequence of Schizosaccharomyces pombe.</title>
        <authorList>
            <person name="Wood V."/>
            <person name="Gwilliam R."/>
            <person name="Rajandream M.A."/>
            <person name="Lyne M.H."/>
            <person name="Lyne R."/>
            <person name="Stewart A."/>
            <person name="Sgouros J.G."/>
            <person name="Peat N."/>
            <person name="Hayles J."/>
            <person name="Baker S.G."/>
            <person name="Basham D."/>
            <person name="Bowman S."/>
            <person name="Brooks K."/>
            <person name="Brown D."/>
            <person name="Brown S."/>
            <person name="Chillingworth T."/>
            <person name="Churcher C.M."/>
            <person name="Collins M."/>
            <person name="Connor R."/>
            <person name="Cronin A."/>
            <person name="Davis P."/>
            <person name="Feltwell T."/>
            <person name="Fraser A."/>
            <person name="Gentles S."/>
            <person name="Goble A."/>
            <person name="Hamlin N."/>
            <person name="Harris D.E."/>
            <person name="Hidalgo J."/>
            <person name="Hodgson G."/>
            <person name="Holroyd S."/>
            <person name="Hornsby T."/>
            <person name="Howarth S."/>
            <person name="Huckle E.J."/>
            <person name="Hunt S."/>
            <person name="Jagels K."/>
            <person name="James K.D."/>
            <person name="Jones L."/>
            <person name="Jones M."/>
            <person name="Leather S."/>
            <person name="McDonald S."/>
            <person name="McLean J."/>
            <person name="Mooney P."/>
            <person name="Moule S."/>
            <person name="Mungall K.L."/>
            <person name="Murphy L.D."/>
            <person name="Niblett D."/>
            <person name="Odell C."/>
            <person name="Oliver K."/>
            <person name="O'Neil S."/>
            <person name="Pearson D."/>
            <person name="Quail M.A."/>
            <person name="Rabbinowitsch E."/>
            <person name="Rutherford K.M."/>
            <person name="Rutter S."/>
            <person name="Saunders D."/>
            <person name="Seeger K."/>
            <person name="Sharp S."/>
            <person name="Skelton J."/>
            <person name="Simmonds M.N."/>
            <person name="Squares R."/>
            <person name="Squares S."/>
            <person name="Stevens K."/>
            <person name="Taylor K."/>
            <person name="Taylor R.G."/>
            <person name="Tivey A."/>
            <person name="Walsh S.V."/>
            <person name="Warren T."/>
            <person name="Whitehead S."/>
            <person name="Woodward J.R."/>
            <person name="Volckaert G."/>
            <person name="Aert R."/>
            <person name="Robben J."/>
            <person name="Grymonprez B."/>
            <person name="Weltjens I."/>
            <person name="Vanstreels E."/>
            <person name="Rieger M."/>
            <person name="Schaefer M."/>
            <person name="Mueller-Auer S."/>
            <person name="Gabel C."/>
            <person name="Fuchs M."/>
            <person name="Duesterhoeft A."/>
            <person name="Fritzc C."/>
            <person name="Holzer E."/>
            <person name="Moestl D."/>
            <person name="Hilbert H."/>
            <person name="Borzym K."/>
            <person name="Langer I."/>
            <person name="Beck A."/>
            <person name="Lehrach H."/>
            <person name="Reinhardt R."/>
            <person name="Pohl T.M."/>
            <person name="Eger P."/>
            <person name="Zimmermann W."/>
            <person name="Wedler H."/>
            <person name="Wambutt R."/>
            <person name="Purnelle B."/>
            <person name="Goffeau A."/>
            <person name="Cadieu E."/>
            <person name="Dreano S."/>
            <person name="Gloux S."/>
            <person name="Lelaure V."/>
            <person name="Mottier S."/>
            <person name="Galibert F."/>
            <person name="Aves S.J."/>
            <person name="Xiang Z."/>
            <person name="Hunt C."/>
            <person name="Moore K."/>
            <person name="Hurst S.M."/>
            <person name="Lucas M."/>
            <person name="Rochet M."/>
            <person name="Gaillardin C."/>
            <person name="Tallada V.A."/>
            <person name="Garzon A."/>
            <person name="Thode G."/>
            <person name="Daga R.R."/>
            <person name="Cruzado L."/>
            <person name="Jimenez J."/>
            <person name="Sanchez M."/>
            <person name="del Rey F."/>
            <person name="Benito J."/>
            <person name="Dominguez A."/>
            <person name="Revuelta J.L."/>
            <person name="Moreno S."/>
            <person name="Armstrong J."/>
            <person name="Forsburg S.L."/>
            <person name="Cerutti L."/>
            <person name="Lowe T."/>
            <person name="McCombie W.R."/>
            <person name="Paulsen I."/>
            <person name="Potashkin J."/>
            <person name="Shpakovski G.V."/>
            <person name="Ussery D."/>
            <person name="Barrell B.G."/>
            <person name="Nurse P."/>
        </authorList>
    </citation>
    <scope>NUCLEOTIDE SEQUENCE [LARGE SCALE GENOMIC DNA]</scope>
    <source>
        <strain>972 / ATCC 24843</strain>
    </source>
</reference>
<reference key="2">
    <citation type="journal article" date="2002" name="Eukaryot. Cell">
        <title>Schizosaccharomyces pombe Git7p, a member of the Saccharomyces cerevisiae Sgtlp family, is required for glucose and cyclic AMP signaling, cell wall integrity, and septation.</title>
        <authorList>
            <person name="Schadick K."/>
            <person name="Fourcade H.M."/>
            <person name="Boumenot P."/>
            <person name="Seitz J.J."/>
            <person name="Morrell J.L."/>
            <person name="Chang L."/>
            <person name="Gould K.L."/>
            <person name="Partridge J.F."/>
            <person name="Allshire R.C."/>
            <person name="Kitagawa K."/>
            <person name="Hieter P."/>
            <person name="Hoffman C.S."/>
        </authorList>
    </citation>
    <scope>FUNCTION</scope>
</reference>
<keyword id="KW-1185">Reference proteome</keyword>